<sequence>MSGSNPAVSINKRKVAPVVLAILDGWGYREEIEHNAVRQASTPVIDALWHAYPHTLIEASGADVGLPDEQMGNSEVGHLTIGAGRIIQQELVRISNTVKENKLITNPALNQFSQSLKKGGGTLHIMGLCSDGGVHSHINHLCGLIEWAASKGLKSVSLHLFTDGRDTSAKSANKYINTIEAKIKSTGVGEISSLCGRYWAMDRDNRWERTSKAYELLTDPRFALSKLSAAESINKSYQEGITDEFIEPVRLSSSFLKDGDGVVFFNFRPDRARQLVKALKLKDFDGFERKNRADIDVLTFTQYESGLPVSVAFPPEPLNDLLGQVISDHGLNQYRTAETEKYPHVTYFLNGGIEKPLKGEVRHLVPSPRVATYDLQPEMSADELTDSCIKAIDSGIYSLVVINFANPDMVGHSGIMTAAIKANEKVDSCVGKLLNSIGKLGGSLLITADHGNSEMMIGPDGQPWTAHTTNPVPVILIEGEKRKLSGYGNDIKLRQSGGGLADLAPTLLHLLNLPKPKAMTGKTLIEPINLPKKPNLIPQPAY</sequence>
<name>GPMI_PROM1</name>
<reference key="1">
    <citation type="journal article" date="2007" name="PLoS Genet.">
        <title>Patterns and implications of gene gain and loss in the evolution of Prochlorococcus.</title>
        <authorList>
            <person name="Kettler G.C."/>
            <person name="Martiny A.C."/>
            <person name="Huang K."/>
            <person name="Zucker J."/>
            <person name="Coleman M.L."/>
            <person name="Rodrigue S."/>
            <person name="Chen F."/>
            <person name="Lapidus A."/>
            <person name="Ferriera S."/>
            <person name="Johnson J."/>
            <person name="Steglich C."/>
            <person name="Church G.M."/>
            <person name="Richardson P."/>
            <person name="Chisholm S.W."/>
        </authorList>
    </citation>
    <scope>NUCLEOTIDE SEQUENCE [LARGE SCALE GENOMIC DNA]</scope>
    <source>
        <strain>NATL1A</strain>
    </source>
</reference>
<dbReference type="EC" id="5.4.2.12" evidence="1"/>
<dbReference type="EMBL" id="CP000553">
    <property type="protein sequence ID" value="ABM76390.1"/>
    <property type="molecule type" value="Genomic_DNA"/>
</dbReference>
<dbReference type="RefSeq" id="WP_011824377.1">
    <property type="nucleotide sequence ID" value="NC_008819.1"/>
</dbReference>
<dbReference type="SMR" id="A2C4I0"/>
<dbReference type="KEGG" id="pme:NATL1_18341"/>
<dbReference type="eggNOG" id="COG0696">
    <property type="taxonomic scope" value="Bacteria"/>
</dbReference>
<dbReference type="HOGENOM" id="CLU_026099_2_0_3"/>
<dbReference type="UniPathway" id="UPA00109">
    <property type="reaction ID" value="UER00186"/>
</dbReference>
<dbReference type="Proteomes" id="UP000002592">
    <property type="component" value="Chromosome"/>
</dbReference>
<dbReference type="GO" id="GO:0005829">
    <property type="term" value="C:cytosol"/>
    <property type="evidence" value="ECO:0007669"/>
    <property type="project" value="TreeGrafter"/>
</dbReference>
<dbReference type="GO" id="GO:0030145">
    <property type="term" value="F:manganese ion binding"/>
    <property type="evidence" value="ECO:0007669"/>
    <property type="project" value="UniProtKB-UniRule"/>
</dbReference>
<dbReference type="GO" id="GO:0004619">
    <property type="term" value="F:phosphoglycerate mutase activity"/>
    <property type="evidence" value="ECO:0007669"/>
    <property type="project" value="UniProtKB-EC"/>
</dbReference>
<dbReference type="GO" id="GO:0006007">
    <property type="term" value="P:glucose catabolic process"/>
    <property type="evidence" value="ECO:0007669"/>
    <property type="project" value="InterPro"/>
</dbReference>
<dbReference type="GO" id="GO:0006096">
    <property type="term" value="P:glycolytic process"/>
    <property type="evidence" value="ECO:0007669"/>
    <property type="project" value="UniProtKB-UniRule"/>
</dbReference>
<dbReference type="CDD" id="cd16010">
    <property type="entry name" value="iPGM"/>
    <property type="match status" value="1"/>
</dbReference>
<dbReference type="FunFam" id="3.40.1450.10:FF:000002">
    <property type="entry name" value="2,3-bisphosphoglycerate-independent phosphoglycerate mutase"/>
    <property type="match status" value="1"/>
</dbReference>
<dbReference type="Gene3D" id="3.40.720.10">
    <property type="entry name" value="Alkaline Phosphatase, subunit A"/>
    <property type="match status" value="1"/>
</dbReference>
<dbReference type="Gene3D" id="3.40.1450.10">
    <property type="entry name" value="BPG-independent phosphoglycerate mutase, domain B"/>
    <property type="match status" value="1"/>
</dbReference>
<dbReference type="HAMAP" id="MF_01038">
    <property type="entry name" value="GpmI"/>
    <property type="match status" value="1"/>
</dbReference>
<dbReference type="InterPro" id="IPR017850">
    <property type="entry name" value="Alkaline_phosphatase_core_sf"/>
</dbReference>
<dbReference type="InterPro" id="IPR011258">
    <property type="entry name" value="BPG-indep_PGM_N"/>
</dbReference>
<dbReference type="InterPro" id="IPR006124">
    <property type="entry name" value="Metalloenzyme"/>
</dbReference>
<dbReference type="InterPro" id="IPR036646">
    <property type="entry name" value="PGAM_B_sf"/>
</dbReference>
<dbReference type="InterPro" id="IPR005995">
    <property type="entry name" value="Pgm_bpd_ind"/>
</dbReference>
<dbReference type="NCBIfam" id="TIGR01307">
    <property type="entry name" value="pgm_bpd_ind"/>
    <property type="match status" value="1"/>
</dbReference>
<dbReference type="PANTHER" id="PTHR31637">
    <property type="entry name" value="2,3-BISPHOSPHOGLYCERATE-INDEPENDENT PHOSPHOGLYCERATE MUTASE"/>
    <property type="match status" value="1"/>
</dbReference>
<dbReference type="PANTHER" id="PTHR31637:SF0">
    <property type="entry name" value="2,3-BISPHOSPHOGLYCERATE-INDEPENDENT PHOSPHOGLYCERATE MUTASE"/>
    <property type="match status" value="1"/>
</dbReference>
<dbReference type="Pfam" id="PF06415">
    <property type="entry name" value="iPGM_N"/>
    <property type="match status" value="1"/>
</dbReference>
<dbReference type="Pfam" id="PF01676">
    <property type="entry name" value="Metalloenzyme"/>
    <property type="match status" value="1"/>
</dbReference>
<dbReference type="PIRSF" id="PIRSF001492">
    <property type="entry name" value="IPGAM"/>
    <property type="match status" value="1"/>
</dbReference>
<dbReference type="SUPFAM" id="SSF64158">
    <property type="entry name" value="2,3-Bisphosphoglycerate-independent phosphoglycerate mutase, substrate-binding domain"/>
    <property type="match status" value="1"/>
</dbReference>
<dbReference type="SUPFAM" id="SSF53649">
    <property type="entry name" value="Alkaline phosphatase-like"/>
    <property type="match status" value="1"/>
</dbReference>
<proteinExistence type="inferred from homology"/>
<keyword id="KW-0324">Glycolysis</keyword>
<keyword id="KW-0413">Isomerase</keyword>
<keyword id="KW-0464">Manganese</keyword>
<keyword id="KW-0479">Metal-binding</keyword>
<accession>A2C4I0</accession>
<feature type="chain" id="PRO_1000063984" description="2,3-bisphosphoglycerate-independent phosphoglycerate mutase">
    <location>
        <begin position="1"/>
        <end position="542"/>
    </location>
</feature>
<feature type="active site" description="Phosphoserine intermediate" evidence="1">
    <location>
        <position position="74"/>
    </location>
</feature>
<feature type="binding site" evidence="1">
    <location>
        <position position="24"/>
    </location>
    <ligand>
        <name>Mn(2+)</name>
        <dbReference type="ChEBI" id="CHEBI:29035"/>
        <label>2</label>
    </ligand>
</feature>
<feature type="binding site" evidence="1">
    <location>
        <position position="74"/>
    </location>
    <ligand>
        <name>Mn(2+)</name>
        <dbReference type="ChEBI" id="CHEBI:29035"/>
        <label>2</label>
    </ligand>
</feature>
<feature type="binding site" evidence="1">
    <location>
        <position position="135"/>
    </location>
    <ligand>
        <name>substrate</name>
    </ligand>
</feature>
<feature type="binding site" evidence="1">
    <location>
        <begin position="165"/>
        <end position="166"/>
    </location>
    <ligand>
        <name>substrate</name>
    </ligand>
</feature>
<feature type="binding site" evidence="1">
    <location>
        <position position="197"/>
    </location>
    <ligand>
        <name>substrate</name>
    </ligand>
</feature>
<feature type="binding site" evidence="1">
    <location>
        <position position="203"/>
    </location>
    <ligand>
        <name>substrate</name>
    </ligand>
</feature>
<feature type="binding site" evidence="1">
    <location>
        <begin position="268"/>
        <end position="271"/>
    </location>
    <ligand>
        <name>substrate</name>
    </ligand>
</feature>
<feature type="binding site" evidence="1">
    <location>
        <position position="341"/>
    </location>
    <ligand>
        <name>substrate</name>
    </ligand>
</feature>
<feature type="binding site" evidence="1">
    <location>
        <position position="408"/>
    </location>
    <ligand>
        <name>Mn(2+)</name>
        <dbReference type="ChEBI" id="CHEBI:29035"/>
        <label>1</label>
    </ligand>
</feature>
<feature type="binding site" evidence="1">
    <location>
        <position position="412"/>
    </location>
    <ligand>
        <name>Mn(2+)</name>
        <dbReference type="ChEBI" id="CHEBI:29035"/>
        <label>1</label>
    </ligand>
</feature>
<feature type="binding site" evidence="1">
    <location>
        <position position="449"/>
    </location>
    <ligand>
        <name>Mn(2+)</name>
        <dbReference type="ChEBI" id="CHEBI:29035"/>
        <label>2</label>
    </ligand>
</feature>
<feature type="binding site" evidence="1">
    <location>
        <position position="450"/>
    </location>
    <ligand>
        <name>Mn(2+)</name>
        <dbReference type="ChEBI" id="CHEBI:29035"/>
        <label>2</label>
    </ligand>
</feature>
<feature type="binding site" evidence="1">
    <location>
        <position position="467"/>
    </location>
    <ligand>
        <name>Mn(2+)</name>
        <dbReference type="ChEBI" id="CHEBI:29035"/>
        <label>1</label>
    </ligand>
</feature>
<organism>
    <name type="scientific">Prochlorococcus marinus (strain NATL1A)</name>
    <dbReference type="NCBI Taxonomy" id="167555"/>
    <lineage>
        <taxon>Bacteria</taxon>
        <taxon>Bacillati</taxon>
        <taxon>Cyanobacteriota</taxon>
        <taxon>Cyanophyceae</taxon>
        <taxon>Synechococcales</taxon>
        <taxon>Prochlorococcaceae</taxon>
        <taxon>Prochlorococcus</taxon>
    </lineage>
</organism>
<gene>
    <name evidence="1" type="primary">gpmI</name>
    <name type="ordered locus">NATL1_18341</name>
</gene>
<comment type="function">
    <text evidence="1">Catalyzes the interconversion of 2-phosphoglycerate and 3-phosphoglycerate.</text>
</comment>
<comment type="catalytic activity">
    <reaction evidence="1">
        <text>(2R)-2-phosphoglycerate = (2R)-3-phosphoglycerate</text>
        <dbReference type="Rhea" id="RHEA:15901"/>
        <dbReference type="ChEBI" id="CHEBI:58272"/>
        <dbReference type="ChEBI" id="CHEBI:58289"/>
        <dbReference type="EC" id="5.4.2.12"/>
    </reaction>
</comment>
<comment type="cofactor">
    <cofactor evidence="1">
        <name>Mn(2+)</name>
        <dbReference type="ChEBI" id="CHEBI:29035"/>
    </cofactor>
    <text evidence="1">Binds 2 manganese ions per subunit.</text>
</comment>
<comment type="pathway">
    <text evidence="1">Carbohydrate degradation; glycolysis; pyruvate from D-glyceraldehyde 3-phosphate: step 3/5.</text>
</comment>
<comment type="subunit">
    <text evidence="1">Monomer.</text>
</comment>
<comment type="similarity">
    <text evidence="1">Belongs to the BPG-independent phosphoglycerate mutase family.</text>
</comment>
<evidence type="ECO:0000255" key="1">
    <source>
        <dbReference type="HAMAP-Rule" id="MF_01038"/>
    </source>
</evidence>
<protein>
    <recommendedName>
        <fullName evidence="1">2,3-bisphosphoglycerate-independent phosphoglycerate mutase</fullName>
        <shortName evidence="1">BPG-independent PGAM</shortName>
        <shortName evidence="1">Phosphoglyceromutase</shortName>
        <shortName evidence="1">iPGM</shortName>
        <ecNumber evidence="1">5.4.2.12</ecNumber>
    </recommendedName>
</protein>